<accession>Q6INC4</accession>
<protein>
    <recommendedName>
        <fullName>APC membrane recruitment protein 2</fullName>
        <shortName>Amer2</shortName>
        <shortName>XAmer2</shortName>
    </recommendedName>
    <alternativeName>
        <fullName>Protein FAM123A</fullName>
    </alternativeName>
</protein>
<reference key="1">
    <citation type="submission" date="2004-06" db="EMBL/GenBank/DDBJ databases">
        <authorList>
            <consortium name="NIH - Xenopus Gene Collection (XGC) project"/>
        </authorList>
    </citation>
    <scope>NUCLEOTIDE SEQUENCE [LARGE SCALE MRNA]</scope>
    <source>
        <tissue>Eye</tissue>
    </source>
</reference>
<reference key="2">
    <citation type="journal article" date="2012" name="J. Biol. Chem.">
        <title>Amer2 protein is a novel negative regulator of Wnt/beta-Catenin signaling involved in neuroectodermal patterning.</title>
        <authorList>
            <person name="Pfister A.S."/>
            <person name="Tanneberger K."/>
            <person name="Schambony A."/>
            <person name="Behrens J."/>
        </authorList>
    </citation>
    <scope>FUNCTION</scope>
    <scope>DEVELOPMENTAL STAGE</scope>
</reference>
<name>AMER2_XENLA</name>
<sequence>MDLHYDCAESPAAEQPSGKINKTAFKLFGKRRSGSAMPTIFGVKNKGDGKGTGNIGMVRSKTLDGLADVVLESNKKEEPCTNAGAGQLNTEKSPKVVTINPDVSSDSSVAKSHSFFSLLKRNGKSENVKGELAEQKPGSRQKRGLKGLFNSMRWSKKDKSYKDDKEGASENQPGLILPSSLTASLECIKEETQKPLCEKEKSEEDIPADVPSVEHSGDVNTSAEENPLNGCVESPCPALITKEPQLEDPPVIQQVDNLYQLPDPEVETLPDNKDEDVTGDIPVNTVSIVEPECDVGQEIAAPDPTTVDPPSEPSFDRICLMLADVTSLKSFDSLTGCGDVIADQDDDGGSSKGSKVVPGNGKKVTSKKNANIVAYQGGGEEMASPEEADETYVQELFSMIPQSEGASEKPEKVNGTTQVTAREVKCSDSGRDRNTVKPSKLRQVPIRRKERGDQNSKGNEKRQCHRNSDEGYWDSTTLGQEEEEPRSVGKQALPRDSCSGDALYDLYTDPDESIPKAQAEEPPVSHSHSKPLSPVTASCPVKTASSNKESKIPISIKHLPVHTTNQGIDSGSGSAAGHSHPVKSELPRTKIPVSKVLVRRVSNKAITETAAGKRAIHDPARKHH</sequence>
<organism>
    <name type="scientific">Xenopus laevis</name>
    <name type="common">African clawed frog</name>
    <dbReference type="NCBI Taxonomy" id="8355"/>
    <lineage>
        <taxon>Eukaryota</taxon>
        <taxon>Metazoa</taxon>
        <taxon>Chordata</taxon>
        <taxon>Craniata</taxon>
        <taxon>Vertebrata</taxon>
        <taxon>Euteleostomi</taxon>
        <taxon>Amphibia</taxon>
        <taxon>Batrachia</taxon>
        <taxon>Anura</taxon>
        <taxon>Pipoidea</taxon>
        <taxon>Pipidae</taxon>
        <taxon>Xenopodinae</taxon>
        <taxon>Xenopus</taxon>
        <taxon>Xenopus</taxon>
    </lineage>
</organism>
<comment type="function">
    <text evidence="3">Negative regulator of the canonical Wnt signaling pathway involved in neuroectodermal patterning. Acts by specifically binding phosphatidylinositol 4,5-bisphosphate (PtdIns(4,5)P2), translocating to the cell membrane and interacting with key regulators of the canonical Wnt signaling pathway, such as components of the beta-catenin destruction complex.</text>
</comment>
<comment type="subcellular location">
    <subcellularLocation>
        <location evidence="1">Cell membrane</location>
        <topology evidence="1">Peripheral membrane protein</topology>
    </subcellularLocation>
    <text evidence="1">Translocates to the cell membrane following binding to PtdIns(4,5)P2.</text>
</comment>
<comment type="developmental stage">
    <text evidence="3">Expressed in the ectoderm at early gastrula stages. During neurulation, expressed in the dorsal neuroectoderm, with the strongest signal detectable in the anterior neural plate. In tadpole stages, present most prominently in the brain, eye, otic vesicle, and cranial ganglia. From stage 30 onward, expression is observed in the forebrain, midbrain, and hindbrain but is excluded from the boundaries between these domains.</text>
</comment>
<comment type="similarity">
    <text evidence="4">Belongs to the Amer family.</text>
</comment>
<comment type="sequence caution" evidence="4">
    <conflict type="erroneous initiation">
        <sequence resource="EMBL-CDS" id="AAH72359"/>
    </conflict>
    <text>Extended N-terminus.</text>
</comment>
<keyword id="KW-1003">Cell membrane</keyword>
<keyword id="KW-0446">Lipid-binding</keyword>
<keyword id="KW-0472">Membrane</keyword>
<keyword id="KW-1185">Reference proteome</keyword>
<keyword id="KW-0879">Wnt signaling pathway</keyword>
<evidence type="ECO:0000250" key="1"/>
<evidence type="ECO:0000256" key="2">
    <source>
        <dbReference type="SAM" id="MobiDB-lite"/>
    </source>
</evidence>
<evidence type="ECO:0000269" key="3">
    <source>
    </source>
</evidence>
<evidence type="ECO:0000305" key="4"/>
<proteinExistence type="evidence at transcript level"/>
<dbReference type="EMBL" id="BC072359">
    <property type="protein sequence ID" value="AAH72359.1"/>
    <property type="status" value="ALT_INIT"/>
    <property type="molecule type" value="mRNA"/>
</dbReference>
<dbReference type="AGR" id="Xenbase:XB-GENE-994667"/>
<dbReference type="Xenbase" id="XB-GENE-994667">
    <property type="gene designation" value="amer2.S"/>
</dbReference>
<dbReference type="OMA" id="RICLMFA"/>
<dbReference type="Proteomes" id="UP000186698">
    <property type="component" value="Unplaced"/>
</dbReference>
<dbReference type="GO" id="GO:0005886">
    <property type="term" value="C:plasma membrane"/>
    <property type="evidence" value="ECO:0000250"/>
    <property type="project" value="UniProtKB"/>
</dbReference>
<dbReference type="GO" id="GO:0008013">
    <property type="term" value="F:beta-catenin binding"/>
    <property type="evidence" value="ECO:0000318"/>
    <property type="project" value="GO_Central"/>
</dbReference>
<dbReference type="GO" id="GO:0005546">
    <property type="term" value="F:phosphatidylinositol-4,5-bisphosphate binding"/>
    <property type="evidence" value="ECO:0000250"/>
    <property type="project" value="UniProtKB"/>
</dbReference>
<dbReference type="GO" id="GO:0007398">
    <property type="term" value="P:ectoderm development"/>
    <property type="evidence" value="ECO:0000315"/>
    <property type="project" value="UniProtKB"/>
</dbReference>
<dbReference type="GO" id="GO:0090090">
    <property type="term" value="P:negative regulation of canonical Wnt signaling pathway"/>
    <property type="evidence" value="ECO:0000250"/>
    <property type="project" value="UniProtKB"/>
</dbReference>
<dbReference type="GO" id="GO:0060828">
    <property type="term" value="P:regulation of canonical Wnt signaling pathway"/>
    <property type="evidence" value="ECO:0000318"/>
    <property type="project" value="GO_Central"/>
</dbReference>
<dbReference type="GO" id="GO:0016055">
    <property type="term" value="P:Wnt signaling pathway"/>
    <property type="evidence" value="ECO:0007669"/>
    <property type="project" value="UniProtKB-KW"/>
</dbReference>
<dbReference type="InterPro" id="IPR019003">
    <property type="entry name" value="AMER"/>
</dbReference>
<dbReference type="PANTHER" id="PTHR22237:SF1">
    <property type="entry name" value="APC MEMBRANE RECRUITMENT PROTEIN 2"/>
    <property type="match status" value="1"/>
</dbReference>
<dbReference type="PANTHER" id="PTHR22237">
    <property type="entry name" value="APC MEMBRANE RECRUITMENT PROTEIN 2-RELATED"/>
    <property type="match status" value="1"/>
</dbReference>
<dbReference type="Pfam" id="PF09422">
    <property type="entry name" value="AMER"/>
    <property type="match status" value="1"/>
</dbReference>
<feature type="chain" id="PRO_0000416262" description="APC membrane recruitment protein 2">
    <location>
        <begin position="1"/>
        <end position="624"/>
    </location>
</feature>
<feature type="region of interest" description="Disordered" evidence="2">
    <location>
        <begin position="77"/>
        <end position="111"/>
    </location>
</feature>
<feature type="region of interest" description="Disordered" evidence="2">
    <location>
        <begin position="126"/>
        <end position="177"/>
    </location>
</feature>
<feature type="region of interest" description="Disordered" evidence="2">
    <location>
        <begin position="195"/>
        <end position="230"/>
    </location>
</feature>
<feature type="region of interest" description="Disordered" evidence="2">
    <location>
        <begin position="342"/>
        <end position="369"/>
    </location>
</feature>
<feature type="region of interest" description="Disordered" evidence="2">
    <location>
        <begin position="397"/>
        <end position="588"/>
    </location>
</feature>
<feature type="compositionally biased region" description="Low complexity" evidence="2">
    <location>
        <begin position="102"/>
        <end position="111"/>
    </location>
</feature>
<feature type="compositionally biased region" description="Basic and acidic residues" evidence="2">
    <location>
        <begin position="155"/>
        <end position="168"/>
    </location>
</feature>
<feature type="compositionally biased region" description="Basic and acidic residues" evidence="2">
    <location>
        <begin position="195"/>
        <end position="204"/>
    </location>
</feature>
<feature type="compositionally biased region" description="Low complexity" evidence="2">
    <location>
        <begin position="352"/>
        <end position="363"/>
    </location>
</feature>
<feature type="compositionally biased region" description="Basic and acidic residues" evidence="2">
    <location>
        <begin position="422"/>
        <end position="435"/>
    </location>
</feature>
<feature type="compositionally biased region" description="Basic and acidic residues" evidence="2">
    <location>
        <begin position="450"/>
        <end position="469"/>
    </location>
</feature>
<gene>
    <name type="primary">amer2</name>
    <name type="synonym">fam123a</name>
</gene>